<gene>
    <name evidence="1" type="primary">rpsH</name>
    <name type="ordered locus">jk1797</name>
</gene>
<name>RS8_CORJK</name>
<comment type="function">
    <text evidence="1">One of the primary rRNA binding proteins, it binds directly to 16S rRNA central domain where it helps coordinate assembly of the platform of the 30S subunit.</text>
</comment>
<comment type="subunit">
    <text evidence="1">Part of the 30S ribosomal subunit. Contacts proteins S5 and S12.</text>
</comment>
<comment type="similarity">
    <text evidence="1">Belongs to the universal ribosomal protein uS8 family.</text>
</comment>
<keyword id="KW-1185">Reference proteome</keyword>
<keyword id="KW-0687">Ribonucleoprotein</keyword>
<keyword id="KW-0689">Ribosomal protein</keyword>
<keyword id="KW-0694">RNA-binding</keyword>
<keyword id="KW-0699">rRNA-binding</keyword>
<dbReference type="EMBL" id="CR931997">
    <property type="protein sequence ID" value="CAI37974.1"/>
    <property type="molecule type" value="Genomic_DNA"/>
</dbReference>
<dbReference type="RefSeq" id="WP_011274137.1">
    <property type="nucleotide sequence ID" value="NC_007164.1"/>
</dbReference>
<dbReference type="SMR" id="Q4JT83"/>
<dbReference type="STRING" id="306537.jk1797"/>
<dbReference type="KEGG" id="cjk:jk1797"/>
<dbReference type="PATRIC" id="fig|306537.10.peg.1822"/>
<dbReference type="eggNOG" id="COG0096">
    <property type="taxonomic scope" value="Bacteria"/>
</dbReference>
<dbReference type="HOGENOM" id="CLU_098428_0_1_11"/>
<dbReference type="OrthoDB" id="9802617at2"/>
<dbReference type="Proteomes" id="UP000000545">
    <property type="component" value="Chromosome"/>
</dbReference>
<dbReference type="GO" id="GO:1990904">
    <property type="term" value="C:ribonucleoprotein complex"/>
    <property type="evidence" value="ECO:0007669"/>
    <property type="project" value="UniProtKB-KW"/>
</dbReference>
<dbReference type="GO" id="GO:0005840">
    <property type="term" value="C:ribosome"/>
    <property type="evidence" value="ECO:0007669"/>
    <property type="project" value="UniProtKB-KW"/>
</dbReference>
<dbReference type="GO" id="GO:0019843">
    <property type="term" value="F:rRNA binding"/>
    <property type="evidence" value="ECO:0007669"/>
    <property type="project" value="UniProtKB-UniRule"/>
</dbReference>
<dbReference type="GO" id="GO:0003735">
    <property type="term" value="F:structural constituent of ribosome"/>
    <property type="evidence" value="ECO:0007669"/>
    <property type="project" value="InterPro"/>
</dbReference>
<dbReference type="GO" id="GO:0006412">
    <property type="term" value="P:translation"/>
    <property type="evidence" value="ECO:0007669"/>
    <property type="project" value="UniProtKB-UniRule"/>
</dbReference>
<dbReference type="FunFam" id="3.30.1370.30:FF:000002">
    <property type="entry name" value="30S ribosomal protein S8"/>
    <property type="match status" value="1"/>
</dbReference>
<dbReference type="FunFam" id="3.30.1490.10:FF:000001">
    <property type="entry name" value="30S ribosomal protein S8"/>
    <property type="match status" value="1"/>
</dbReference>
<dbReference type="Gene3D" id="3.30.1370.30">
    <property type="match status" value="1"/>
</dbReference>
<dbReference type="Gene3D" id="3.30.1490.10">
    <property type="match status" value="1"/>
</dbReference>
<dbReference type="HAMAP" id="MF_01302_B">
    <property type="entry name" value="Ribosomal_uS8_B"/>
    <property type="match status" value="1"/>
</dbReference>
<dbReference type="InterPro" id="IPR000630">
    <property type="entry name" value="Ribosomal_uS8"/>
</dbReference>
<dbReference type="InterPro" id="IPR035987">
    <property type="entry name" value="Ribosomal_uS8_sf"/>
</dbReference>
<dbReference type="NCBIfam" id="NF001109">
    <property type="entry name" value="PRK00136.1"/>
    <property type="match status" value="1"/>
</dbReference>
<dbReference type="PANTHER" id="PTHR11758">
    <property type="entry name" value="40S RIBOSOMAL PROTEIN S15A"/>
    <property type="match status" value="1"/>
</dbReference>
<dbReference type="Pfam" id="PF00410">
    <property type="entry name" value="Ribosomal_S8"/>
    <property type="match status" value="1"/>
</dbReference>
<dbReference type="SUPFAM" id="SSF56047">
    <property type="entry name" value="Ribosomal protein S8"/>
    <property type="match status" value="1"/>
</dbReference>
<sequence length="132" mass="14320">MTMTDPIADMLSRVRNASNAFHESVSMPSSKIKANIAEILKEEGYIADYTVNDAKVGKTLDIELKYGPSRERSISGLRRVSKPGLRVYAKSNELPQVLGGLGVAIISTSHGLLTDREAQNKGVGGEVLAYVW</sequence>
<proteinExistence type="inferred from homology"/>
<reference key="1">
    <citation type="journal article" date="2005" name="J. Bacteriol.">
        <title>Complete genome sequence and analysis of the multiresistant nosocomial pathogen Corynebacterium jeikeium K411, a lipid-requiring bacterium of the human skin flora.</title>
        <authorList>
            <person name="Tauch A."/>
            <person name="Kaiser O."/>
            <person name="Hain T."/>
            <person name="Goesmann A."/>
            <person name="Weisshaar B."/>
            <person name="Albersmeier A."/>
            <person name="Bekel T."/>
            <person name="Bischoff N."/>
            <person name="Brune I."/>
            <person name="Chakraborty T."/>
            <person name="Kalinowski J."/>
            <person name="Meyer F."/>
            <person name="Rupp O."/>
            <person name="Schneiker S."/>
            <person name="Viehoever P."/>
            <person name="Puehler A."/>
        </authorList>
    </citation>
    <scope>NUCLEOTIDE SEQUENCE [LARGE SCALE GENOMIC DNA]</scope>
    <source>
        <strain>K411</strain>
    </source>
</reference>
<evidence type="ECO:0000255" key="1">
    <source>
        <dbReference type="HAMAP-Rule" id="MF_01302"/>
    </source>
</evidence>
<evidence type="ECO:0000305" key="2"/>
<organism>
    <name type="scientific">Corynebacterium jeikeium (strain K411)</name>
    <dbReference type="NCBI Taxonomy" id="306537"/>
    <lineage>
        <taxon>Bacteria</taxon>
        <taxon>Bacillati</taxon>
        <taxon>Actinomycetota</taxon>
        <taxon>Actinomycetes</taxon>
        <taxon>Mycobacteriales</taxon>
        <taxon>Corynebacteriaceae</taxon>
        <taxon>Corynebacterium</taxon>
    </lineage>
</organism>
<accession>Q4JT83</accession>
<feature type="chain" id="PRO_0000225866" description="Small ribosomal subunit protein uS8">
    <location>
        <begin position="1"/>
        <end position="132"/>
    </location>
</feature>
<protein>
    <recommendedName>
        <fullName evidence="1">Small ribosomal subunit protein uS8</fullName>
    </recommendedName>
    <alternativeName>
        <fullName evidence="2">30S ribosomal protein S8</fullName>
    </alternativeName>
</protein>